<gene>
    <name evidence="1" type="primary">astA</name>
    <name type="ordered locus">SeHA_C1431</name>
</gene>
<comment type="function">
    <text evidence="1">Catalyzes the transfer of succinyl-CoA to arginine to produce N(2)-succinylarginine.</text>
</comment>
<comment type="catalytic activity">
    <reaction evidence="1">
        <text>succinyl-CoA + L-arginine = N(2)-succinyl-L-arginine + CoA + H(+)</text>
        <dbReference type="Rhea" id="RHEA:15185"/>
        <dbReference type="ChEBI" id="CHEBI:15378"/>
        <dbReference type="ChEBI" id="CHEBI:32682"/>
        <dbReference type="ChEBI" id="CHEBI:57287"/>
        <dbReference type="ChEBI" id="CHEBI:57292"/>
        <dbReference type="ChEBI" id="CHEBI:58241"/>
        <dbReference type="EC" id="2.3.1.109"/>
    </reaction>
</comment>
<comment type="pathway">
    <text evidence="1">Amino-acid degradation; L-arginine degradation via AST pathway; L-glutamate and succinate from L-arginine: step 1/5.</text>
</comment>
<comment type="similarity">
    <text evidence="1">Belongs to the arginine N-succinyltransferase family.</text>
</comment>
<name>ASTA_SALHS</name>
<reference key="1">
    <citation type="journal article" date="2011" name="J. Bacteriol.">
        <title>Comparative genomics of 28 Salmonella enterica isolates: evidence for CRISPR-mediated adaptive sublineage evolution.</title>
        <authorList>
            <person name="Fricke W.F."/>
            <person name="Mammel M.K."/>
            <person name="McDermott P.F."/>
            <person name="Tartera C."/>
            <person name="White D.G."/>
            <person name="Leclerc J.E."/>
            <person name="Ravel J."/>
            <person name="Cebula T.A."/>
        </authorList>
    </citation>
    <scope>NUCLEOTIDE SEQUENCE [LARGE SCALE GENOMIC DNA]</scope>
    <source>
        <strain>SL476</strain>
    </source>
</reference>
<evidence type="ECO:0000255" key="1">
    <source>
        <dbReference type="HAMAP-Rule" id="MF_01171"/>
    </source>
</evidence>
<protein>
    <recommendedName>
        <fullName evidence="1">Arginine N-succinyltransferase</fullName>
        <shortName evidence="1">AST</shortName>
        <ecNumber evidence="1">2.3.1.109</ecNumber>
    </recommendedName>
    <alternativeName>
        <fullName evidence="1">AOST</fullName>
    </alternativeName>
</protein>
<keyword id="KW-0012">Acyltransferase</keyword>
<keyword id="KW-0056">Arginine metabolism</keyword>
<keyword id="KW-0808">Transferase</keyword>
<dbReference type="EC" id="2.3.1.109" evidence="1"/>
<dbReference type="EMBL" id="CP001120">
    <property type="protein sequence ID" value="ACF67362.1"/>
    <property type="molecule type" value="Genomic_DNA"/>
</dbReference>
<dbReference type="RefSeq" id="WP_001263889.1">
    <property type="nucleotide sequence ID" value="NC_011083.1"/>
</dbReference>
<dbReference type="SMR" id="B4TGE1"/>
<dbReference type="KEGG" id="seh:SeHA_C1431"/>
<dbReference type="HOGENOM" id="CLU_057655_0_0_6"/>
<dbReference type="UniPathway" id="UPA00185">
    <property type="reaction ID" value="UER00279"/>
</dbReference>
<dbReference type="Proteomes" id="UP000001866">
    <property type="component" value="Chromosome"/>
</dbReference>
<dbReference type="GO" id="GO:0008791">
    <property type="term" value="F:arginine N-succinyltransferase activity"/>
    <property type="evidence" value="ECO:0007669"/>
    <property type="project" value="UniProtKB-UniRule"/>
</dbReference>
<dbReference type="GO" id="GO:0019544">
    <property type="term" value="P:arginine catabolic process to glutamate"/>
    <property type="evidence" value="ECO:0007669"/>
    <property type="project" value="UniProtKB-UniRule"/>
</dbReference>
<dbReference type="GO" id="GO:0019545">
    <property type="term" value="P:arginine catabolic process to succinate"/>
    <property type="evidence" value="ECO:0007669"/>
    <property type="project" value="UniProtKB-UniRule"/>
</dbReference>
<dbReference type="Gene3D" id="2.40.40.20">
    <property type="match status" value="1"/>
</dbReference>
<dbReference type="Gene3D" id="3.40.630.30">
    <property type="match status" value="1"/>
</dbReference>
<dbReference type="HAMAP" id="MF_01171">
    <property type="entry name" value="AstA"/>
    <property type="match status" value="1"/>
</dbReference>
<dbReference type="InterPro" id="IPR016181">
    <property type="entry name" value="Acyl_CoA_acyltransferase"/>
</dbReference>
<dbReference type="InterPro" id="IPR007041">
    <property type="entry name" value="Arg_succinylTrfase_AstA/AruG"/>
</dbReference>
<dbReference type="InterPro" id="IPR017650">
    <property type="entry name" value="Arginine_N-succinylTrfase"/>
</dbReference>
<dbReference type="NCBIfam" id="TIGR03243">
    <property type="entry name" value="arg_catab_AOST"/>
    <property type="match status" value="1"/>
</dbReference>
<dbReference type="NCBIfam" id="TIGR03244">
    <property type="entry name" value="arg_catab_AstA"/>
    <property type="match status" value="1"/>
</dbReference>
<dbReference type="NCBIfam" id="NF007770">
    <property type="entry name" value="PRK10456.1"/>
    <property type="match status" value="1"/>
</dbReference>
<dbReference type="PANTHER" id="PTHR30420:SF1">
    <property type="entry name" value="ARGININE N-SUCCINYLTRANSFERASE"/>
    <property type="match status" value="1"/>
</dbReference>
<dbReference type="PANTHER" id="PTHR30420">
    <property type="entry name" value="N-SUCCINYLARGININE DIHYDROLASE"/>
    <property type="match status" value="1"/>
</dbReference>
<dbReference type="Pfam" id="PF04958">
    <property type="entry name" value="AstA"/>
    <property type="match status" value="1"/>
</dbReference>
<dbReference type="SUPFAM" id="SSF55729">
    <property type="entry name" value="Acyl-CoA N-acyltransferases (Nat)"/>
    <property type="match status" value="1"/>
</dbReference>
<sequence>MRVIRPVEHADIAALMQLAGKTGGGLTSLPANEATLAARIERALKTWSGELPKGEQGYVFVLEDSETGEVGGICAIEVAVGLNDPWYNYRVGTLVHASKELNVYNALPTLFLSNDHTGSSELCTLFLDPEWRKEGNGYLLSKSRFMFMAAFRDKFNEKVVAEMRGVIDEHGYSPFWQSLGKRFFSMDFSRADFLCGTGQKAFIAELMPKHPIYTHFLSEEAQAVIGEVHPQTAPARAVLEKEGFRYRHYIDIFDGGPTLECDIDRVRAIRKSRLVEVAEGQPAPGDYPACLVANENYHHFRAALVRADPQTSRLVLTAAQLDALKCRAGDHVRLVRLCAEEKTV</sequence>
<proteinExistence type="inferred from homology"/>
<accession>B4TGE1</accession>
<feature type="chain" id="PRO_1000137987" description="Arginine N-succinyltransferase">
    <location>
        <begin position="1"/>
        <end position="344"/>
    </location>
</feature>
<feature type="active site" description="Proton donor" evidence="1">
    <location>
        <position position="229"/>
    </location>
</feature>
<feature type="binding site" evidence="1">
    <location>
        <position position="125"/>
    </location>
    <ligand>
        <name>succinyl-CoA</name>
        <dbReference type="ChEBI" id="CHEBI:57292"/>
    </ligand>
</feature>
<organism>
    <name type="scientific">Salmonella heidelberg (strain SL476)</name>
    <dbReference type="NCBI Taxonomy" id="454169"/>
    <lineage>
        <taxon>Bacteria</taxon>
        <taxon>Pseudomonadati</taxon>
        <taxon>Pseudomonadota</taxon>
        <taxon>Gammaproteobacteria</taxon>
        <taxon>Enterobacterales</taxon>
        <taxon>Enterobacteriaceae</taxon>
        <taxon>Salmonella</taxon>
    </lineage>
</organism>